<proteinExistence type="inferred from homology"/>
<feature type="chain" id="PRO_0000408193" description="Heterogeneous nuclear rnp K-like protein 2">
    <location>
        <begin position="1"/>
        <end position="381"/>
    </location>
</feature>
<feature type="domain" description="KH 1" evidence="3">
    <location>
        <begin position="43"/>
        <end position="107"/>
    </location>
</feature>
<feature type="domain" description="KH 2" evidence="3">
    <location>
        <begin position="156"/>
        <end position="221"/>
    </location>
</feature>
<feature type="domain" description="KH 3" evidence="3">
    <location>
        <begin position="258"/>
        <end position="326"/>
    </location>
</feature>
<feature type="region of interest" description="Disordered" evidence="4">
    <location>
        <begin position="1"/>
        <end position="34"/>
    </location>
</feature>
<feature type="region of interest" description="Disordered" evidence="4">
    <location>
        <begin position="344"/>
        <end position="381"/>
    </location>
</feature>
<feature type="compositionally biased region" description="Low complexity" evidence="4">
    <location>
        <begin position="15"/>
        <end position="33"/>
    </location>
</feature>
<feature type="compositionally biased region" description="Basic and acidic residues" evidence="4">
    <location>
        <begin position="369"/>
        <end position="381"/>
    </location>
</feature>
<feature type="modified residue" description="Phosphoserine" evidence="2">
    <location>
        <position position="358"/>
    </location>
</feature>
<feature type="modified residue" description="Phosphoserine" evidence="2">
    <location>
        <position position="360"/>
    </location>
</feature>
<feature type="modified residue" description="Phosphoserine" evidence="2">
    <location>
        <position position="362"/>
    </location>
</feature>
<dbReference type="EMBL" id="ACFL01000072">
    <property type="protein sequence ID" value="EEU07706.1"/>
    <property type="molecule type" value="Genomic_DNA"/>
</dbReference>
<dbReference type="SMR" id="C7GND0"/>
<dbReference type="Proteomes" id="UP000008073">
    <property type="component" value="Unassembled WGS sequence"/>
</dbReference>
<dbReference type="GO" id="GO:0000781">
    <property type="term" value="C:chromosome, telomeric region"/>
    <property type="evidence" value="ECO:0007669"/>
    <property type="project" value="UniProtKB-SubCell"/>
</dbReference>
<dbReference type="GO" id="GO:0005634">
    <property type="term" value="C:nucleus"/>
    <property type="evidence" value="ECO:0007669"/>
    <property type="project" value="UniProtKB-SubCell"/>
</dbReference>
<dbReference type="GO" id="GO:0000932">
    <property type="term" value="C:P-body"/>
    <property type="evidence" value="ECO:0007669"/>
    <property type="project" value="UniProtKB-SubCell"/>
</dbReference>
<dbReference type="GO" id="GO:0003723">
    <property type="term" value="F:RNA binding"/>
    <property type="evidence" value="ECO:0007669"/>
    <property type="project" value="UniProtKB-KW"/>
</dbReference>
<dbReference type="GO" id="GO:0006325">
    <property type="term" value="P:chromatin organization"/>
    <property type="evidence" value="ECO:0007669"/>
    <property type="project" value="UniProtKB-KW"/>
</dbReference>
<dbReference type="GO" id="GO:0051028">
    <property type="term" value="P:mRNA transport"/>
    <property type="evidence" value="ECO:0007669"/>
    <property type="project" value="UniProtKB-KW"/>
</dbReference>
<dbReference type="GO" id="GO:0006417">
    <property type="term" value="P:regulation of translation"/>
    <property type="evidence" value="ECO:0007669"/>
    <property type="project" value="UniProtKB-KW"/>
</dbReference>
<dbReference type="CDD" id="cd00105">
    <property type="entry name" value="KH-I"/>
    <property type="match status" value="1"/>
</dbReference>
<dbReference type="CDD" id="cd22456">
    <property type="entry name" value="KH-I_Rnc1_rpt2"/>
    <property type="match status" value="1"/>
</dbReference>
<dbReference type="Gene3D" id="3.30.1370.10">
    <property type="entry name" value="K Homology domain, type 1"/>
    <property type="match status" value="3"/>
</dbReference>
<dbReference type="InterPro" id="IPR004087">
    <property type="entry name" value="KH_dom"/>
</dbReference>
<dbReference type="InterPro" id="IPR004088">
    <property type="entry name" value="KH_dom_type_1"/>
</dbReference>
<dbReference type="InterPro" id="IPR036612">
    <property type="entry name" value="KH_dom_type_1_sf"/>
</dbReference>
<dbReference type="PANTHER" id="PTHR10288">
    <property type="entry name" value="KH DOMAIN CONTAINING RNA BINDING PROTEIN"/>
    <property type="match status" value="1"/>
</dbReference>
<dbReference type="Pfam" id="PF00013">
    <property type="entry name" value="KH_1"/>
    <property type="match status" value="3"/>
</dbReference>
<dbReference type="SMART" id="SM00322">
    <property type="entry name" value="KH"/>
    <property type="match status" value="3"/>
</dbReference>
<dbReference type="SUPFAM" id="SSF54791">
    <property type="entry name" value="Eukaryotic type KH-domain (KH-domain type I)"/>
    <property type="match status" value="3"/>
</dbReference>
<dbReference type="PROSITE" id="PS50084">
    <property type="entry name" value="KH_TYPE_1"/>
    <property type="match status" value="3"/>
</dbReference>
<keyword id="KW-0156">Chromatin regulator</keyword>
<keyword id="KW-0158">Chromosome</keyword>
<keyword id="KW-0963">Cytoplasm</keyword>
<keyword id="KW-0509">mRNA transport</keyword>
<keyword id="KW-0539">Nucleus</keyword>
<keyword id="KW-0597">Phosphoprotein</keyword>
<keyword id="KW-0677">Repeat</keyword>
<keyword id="KW-0694">RNA-binding</keyword>
<keyword id="KW-0779">Telomere</keyword>
<keyword id="KW-0810">Translation regulation</keyword>
<keyword id="KW-0813">Transport</keyword>
<organism>
    <name type="scientific">Saccharomyces cerevisiae (strain JAY291)</name>
    <name type="common">Baker's yeast</name>
    <dbReference type="NCBI Taxonomy" id="574961"/>
    <lineage>
        <taxon>Eukaryota</taxon>
        <taxon>Fungi</taxon>
        <taxon>Dikarya</taxon>
        <taxon>Ascomycota</taxon>
        <taxon>Saccharomycotina</taxon>
        <taxon>Saccharomycetes</taxon>
        <taxon>Saccharomycetales</taxon>
        <taxon>Saccharomycetaceae</taxon>
        <taxon>Saccharomyces</taxon>
    </lineage>
</organism>
<evidence type="ECO:0000250" key="1"/>
<evidence type="ECO:0000250" key="2">
    <source>
        <dbReference type="UniProtKB" id="P38199"/>
    </source>
</evidence>
<evidence type="ECO:0000255" key="3">
    <source>
        <dbReference type="PROSITE-ProRule" id="PRU00117"/>
    </source>
</evidence>
<evidence type="ECO:0000256" key="4">
    <source>
        <dbReference type="SAM" id="MobiDB-lite"/>
    </source>
</evidence>
<evidence type="ECO:0000305" key="5"/>
<protein>
    <recommendedName>
        <fullName>Heterogeneous nuclear rnp K-like protein 2</fullName>
    </recommendedName>
    <alternativeName>
        <fullName>KH domain-containing protein 1</fullName>
    </alternativeName>
</protein>
<gene>
    <name type="primary">HEK2</name>
    <name type="synonym">KHD1</name>
    <name type="ORF">C1Q_01761</name>
</gene>
<comment type="function">
    <text evidence="1">RNA-binding protein involved in the correct localization of transcripts in the cell. RNA localization is a widespread mechanism for achieving localized protein synthesis. Required for the asymmetric localization to the daughter cell nucleus of the ASH1 transcript, coding for a specific repressor of transcription. Overexpression inhibits translation of the ASH1 transcript. Involved in the stability of transcripts, like the MTL1 mRNA. Involved in structural and functional organization of telomeric chromatin and regulates silencing at the HMR locus (By similarity).</text>
</comment>
<comment type="subunit">
    <text evidence="1">Binds RNA.</text>
</comment>
<comment type="subcellular location">
    <subcellularLocation>
        <location evidence="1">Cytoplasm</location>
    </subcellularLocation>
    <subcellularLocation>
        <location evidence="1">Cytoplasm</location>
        <location evidence="1">P-body</location>
    </subcellularLocation>
    <subcellularLocation>
        <location evidence="1">Nucleus</location>
    </subcellularLocation>
    <subcellularLocation>
        <location evidence="1">Chromosome</location>
        <location evidence="1">Telomere</location>
    </subcellularLocation>
</comment>
<comment type="PTM">
    <text evidence="1">Phosphorylated by the plasma membrane-Anchored casein kinase YCK1. Phosphorylation at its C-terminus reduces its RNA-binding capacity (By similarity).</text>
</comment>
<comment type="similarity">
    <text evidence="5">Belongs to the HEK2 family.</text>
</comment>
<reference key="1">
    <citation type="journal article" date="2009" name="Genome Res.">
        <title>Genome structure of a Saccharomyces cerevisiae strain widely used in bioethanol production.</title>
        <authorList>
            <person name="Argueso J.L."/>
            <person name="Carazzolle M.F."/>
            <person name="Mieczkowski P.A."/>
            <person name="Duarte F.M."/>
            <person name="Netto O.V.C."/>
            <person name="Missawa S.K."/>
            <person name="Galzerani F."/>
            <person name="Costa G.G.L."/>
            <person name="Vidal R.O."/>
            <person name="Noronha M.F."/>
            <person name="Dominska M."/>
            <person name="Andrietta M.G.S."/>
            <person name="Andrietta S.R."/>
            <person name="Cunha A.F."/>
            <person name="Gomes L.H."/>
            <person name="Tavares F.C.A."/>
            <person name="Alcarde A.R."/>
            <person name="Dietrich F.S."/>
            <person name="McCusker J.H."/>
            <person name="Petes T.D."/>
            <person name="Pereira G.A.G."/>
        </authorList>
    </citation>
    <scope>NUCLEOTIDE SEQUENCE [LARGE SCALE GENOMIC DNA]</scope>
    <source>
        <strain>JAY291</strain>
    </source>
</reference>
<accession>C7GND0</accession>
<sequence>MSQFFEAATPVAIPTNNTNGGSSDAGSAATGGAPVVGTTAQPTINHRLLLSLKEAAKIIGTKGSTISRIRAANSVKIGISEKVPGCSDRILSCAGNVINVANAIGDIVDVLNKRNPENEDAAEGEAEEHYYFHFLNHILPAPSKDEIRDLQQLEDIGYVRLIVANSHISSIIGKAGATIKSLINKHGVKIVASKDFLPASDERIIEIQGFPGSITNVLIEISEIILSDVDVRFSTERSYFPHLKKSSGEPTSPSTSSNTRIELKIPELYVGAIIGRGMNRIKNLKTFTKTNIVVERKDDDDKDENFRKFIITSKFPKNVKLAESMLLKNLNTEIEKRENYKRKLEAAEGDATVVTERSDSASFLEEKEEPQKNHDNKEEQS</sequence>
<name>HEK2_YEAS2</name>